<protein>
    <recommendedName>
        <fullName evidence="1">Small ribosomal subunit protein uS7</fullName>
    </recommendedName>
    <alternativeName>
        <fullName evidence="2">30S ribosomal protein S7</fullName>
    </alternativeName>
</protein>
<dbReference type="EMBL" id="CP000910">
    <property type="protein sequence ID" value="ABY23905.1"/>
    <property type="molecule type" value="Genomic_DNA"/>
</dbReference>
<dbReference type="RefSeq" id="WP_012245571.1">
    <property type="nucleotide sequence ID" value="NC_010168.1"/>
</dbReference>
<dbReference type="SMR" id="A9WSW7"/>
<dbReference type="STRING" id="288705.RSal33209_2173"/>
<dbReference type="KEGG" id="rsa:RSal33209_2173"/>
<dbReference type="eggNOG" id="COG0049">
    <property type="taxonomic scope" value="Bacteria"/>
</dbReference>
<dbReference type="HOGENOM" id="CLU_072226_1_1_11"/>
<dbReference type="Proteomes" id="UP000002007">
    <property type="component" value="Chromosome"/>
</dbReference>
<dbReference type="GO" id="GO:0015935">
    <property type="term" value="C:small ribosomal subunit"/>
    <property type="evidence" value="ECO:0007669"/>
    <property type="project" value="InterPro"/>
</dbReference>
<dbReference type="GO" id="GO:0019843">
    <property type="term" value="F:rRNA binding"/>
    <property type="evidence" value="ECO:0007669"/>
    <property type="project" value="UniProtKB-UniRule"/>
</dbReference>
<dbReference type="GO" id="GO:0003735">
    <property type="term" value="F:structural constituent of ribosome"/>
    <property type="evidence" value="ECO:0007669"/>
    <property type="project" value="InterPro"/>
</dbReference>
<dbReference type="GO" id="GO:0000049">
    <property type="term" value="F:tRNA binding"/>
    <property type="evidence" value="ECO:0007669"/>
    <property type="project" value="UniProtKB-UniRule"/>
</dbReference>
<dbReference type="GO" id="GO:0006412">
    <property type="term" value="P:translation"/>
    <property type="evidence" value="ECO:0007669"/>
    <property type="project" value="UniProtKB-UniRule"/>
</dbReference>
<dbReference type="CDD" id="cd14869">
    <property type="entry name" value="uS7_Bacteria"/>
    <property type="match status" value="1"/>
</dbReference>
<dbReference type="FunFam" id="1.10.455.10:FF:000001">
    <property type="entry name" value="30S ribosomal protein S7"/>
    <property type="match status" value="1"/>
</dbReference>
<dbReference type="Gene3D" id="1.10.455.10">
    <property type="entry name" value="Ribosomal protein S7 domain"/>
    <property type="match status" value="1"/>
</dbReference>
<dbReference type="HAMAP" id="MF_00480_B">
    <property type="entry name" value="Ribosomal_uS7_B"/>
    <property type="match status" value="1"/>
</dbReference>
<dbReference type="InterPro" id="IPR000235">
    <property type="entry name" value="Ribosomal_uS7"/>
</dbReference>
<dbReference type="InterPro" id="IPR005717">
    <property type="entry name" value="Ribosomal_uS7_bac/org-type"/>
</dbReference>
<dbReference type="InterPro" id="IPR020606">
    <property type="entry name" value="Ribosomal_uS7_CS"/>
</dbReference>
<dbReference type="InterPro" id="IPR023798">
    <property type="entry name" value="Ribosomal_uS7_dom"/>
</dbReference>
<dbReference type="InterPro" id="IPR036823">
    <property type="entry name" value="Ribosomal_uS7_dom_sf"/>
</dbReference>
<dbReference type="NCBIfam" id="TIGR01029">
    <property type="entry name" value="rpsG_bact"/>
    <property type="match status" value="1"/>
</dbReference>
<dbReference type="PANTHER" id="PTHR11205">
    <property type="entry name" value="RIBOSOMAL PROTEIN S7"/>
    <property type="match status" value="1"/>
</dbReference>
<dbReference type="Pfam" id="PF00177">
    <property type="entry name" value="Ribosomal_S7"/>
    <property type="match status" value="1"/>
</dbReference>
<dbReference type="PIRSF" id="PIRSF002122">
    <property type="entry name" value="RPS7p_RPS7a_RPS5e_RPS7o"/>
    <property type="match status" value="1"/>
</dbReference>
<dbReference type="SUPFAM" id="SSF47973">
    <property type="entry name" value="Ribosomal protein S7"/>
    <property type="match status" value="1"/>
</dbReference>
<dbReference type="PROSITE" id="PS00052">
    <property type="entry name" value="RIBOSOMAL_S7"/>
    <property type="match status" value="1"/>
</dbReference>
<proteinExistence type="inferred from homology"/>
<organism>
    <name type="scientific">Renibacterium salmoninarum (strain ATCC 33209 / DSM 20767 / JCM 11484 / NBRC 15589 / NCIMB 2235)</name>
    <dbReference type="NCBI Taxonomy" id="288705"/>
    <lineage>
        <taxon>Bacteria</taxon>
        <taxon>Bacillati</taxon>
        <taxon>Actinomycetota</taxon>
        <taxon>Actinomycetes</taxon>
        <taxon>Micrococcales</taxon>
        <taxon>Micrococcaceae</taxon>
        <taxon>Renibacterium</taxon>
    </lineage>
</organism>
<comment type="function">
    <text evidence="1">One of the primary rRNA binding proteins, it binds directly to 16S rRNA where it nucleates assembly of the head domain of the 30S subunit. Is located at the subunit interface close to the decoding center, probably blocks exit of the E-site tRNA.</text>
</comment>
<comment type="subunit">
    <text evidence="1">Part of the 30S ribosomal subunit. Contacts proteins S9 and S11.</text>
</comment>
<comment type="similarity">
    <text evidence="1">Belongs to the universal ribosomal protein uS7 family.</text>
</comment>
<reference key="1">
    <citation type="journal article" date="2008" name="J. Bacteriol.">
        <title>Genome sequence of the fish pathogen Renibacterium salmoninarum suggests reductive evolution away from an environmental Arthrobacter ancestor.</title>
        <authorList>
            <person name="Wiens G.D."/>
            <person name="Rockey D.D."/>
            <person name="Wu Z."/>
            <person name="Chang J."/>
            <person name="Levy R."/>
            <person name="Crane S."/>
            <person name="Chen D.S."/>
            <person name="Capri G.R."/>
            <person name="Burnett J.R."/>
            <person name="Sudheesh P.S."/>
            <person name="Schipma M.J."/>
            <person name="Burd H."/>
            <person name="Bhattacharyya A."/>
            <person name="Rhodes L.D."/>
            <person name="Kaul R."/>
            <person name="Strom M.S."/>
        </authorList>
    </citation>
    <scope>NUCLEOTIDE SEQUENCE [LARGE SCALE GENOMIC DNA]</scope>
    <source>
        <strain>ATCC 33209 / DSM 20767 / JCM 11484 / NBRC 15589 / NCIMB 2235</strain>
    </source>
</reference>
<gene>
    <name evidence="1" type="primary">rpsG</name>
    <name type="ordered locus">RSal33209_2173</name>
</gene>
<accession>A9WSW7</accession>
<sequence length="156" mass="17232">MPRKGPAPKRPLVLDPVYGSPLVTQLINKILVDGKKSTAERIVYGALEGAREKSGGDPVAALKKAMENIKPSLEVKSRRVGGATYQVPVEVKPGRATALALRWLVGYSKARREKTMTERLRNEILDACNGLGAAVKRREDTHKMAEANRAFAHYRW</sequence>
<keyword id="KW-1185">Reference proteome</keyword>
<keyword id="KW-0687">Ribonucleoprotein</keyword>
<keyword id="KW-0689">Ribosomal protein</keyword>
<keyword id="KW-0694">RNA-binding</keyword>
<keyword id="KW-0699">rRNA-binding</keyword>
<keyword id="KW-0820">tRNA-binding</keyword>
<evidence type="ECO:0000255" key="1">
    <source>
        <dbReference type="HAMAP-Rule" id="MF_00480"/>
    </source>
</evidence>
<evidence type="ECO:0000305" key="2"/>
<name>RS7_RENSM</name>
<feature type="chain" id="PRO_1000081295" description="Small ribosomal subunit protein uS7">
    <location>
        <begin position="1"/>
        <end position="156"/>
    </location>
</feature>